<gene>
    <name evidence="2" type="primary">park</name>
    <name evidence="7" type="synonym">parkin</name>
    <name evidence="9" type="ORF">Phum_PHUM233570</name>
</gene>
<reference evidence="10" key="1">
    <citation type="journal article" date="2010" name="Proc. Natl. Acad. Sci. U.S.A.">
        <title>Genome sequences of the human body louse and its primary endosymbiont provide insights into the permanent parasitic lifestyle.</title>
        <authorList>
            <person name="Kirkness E.F."/>
            <person name="Haas B.J."/>
            <person name="Sun W."/>
            <person name="Braig H.R."/>
            <person name="Perotti M.A."/>
            <person name="Clark J.M."/>
            <person name="Lee S.H."/>
            <person name="Robertson H.M."/>
            <person name="Kennedy R.C."/>
            <person name="Elhaik E."/>
            <person name="Gerlach D."/>
            <person name="Kriventseva E.V."/>
            <person name="Elsik C.G."/>
            <person name="Graur D."/>
            <person name="Hill C.A."/>
            <person name="Veenstra J.A."/>
            <person name="Walenz B."/>
            <person name="Tubio J.M."/>
            <person name="Ribeiro J.M."/>
            <person name="Rozas J."/>
            <person name="Johnston J.S."/>
            <person name="Reese J.T."/>
            <person name="Popadic A."/>
            <person name="Tojo M."/>
            <person name="Raoult D."/>
            <person name="Reed D.L."/>
            <person name="Tomoyasu Y."/>
            <person name="Krause E."/>
            <person name="Mittapalli O."/>
            <person name="Margam V.M."/>
            <person name="Li H.M."/>
            <person name="Meyer J.M."/>
            <person name="Johnson R.M."/>
            <person name="Romero-Severson J."/>
            <person name="Vanzee J.P."/>
            <person name="Alvarez-Ponce D."/>
            <person name="Vieira F.G."/>
            <person name="Aguade M."/>
            <person name="Guirao-Rico S."/>
            <person name="Anzola J.M."/>
            <person name="Yoon K.S."/>
            <person name="Strycharz J.P."/>
            <person name="Unger M.F."/>
            <person name="Christley S."/>
            <person name="Lobo N.F."/>
            <person name="Seufferheld M.J."/>
            <person name="Wang N."/>
            <person name="Dasch G.A."/>
            <person name="Struchiner C.J."/>
            <person name="Madey G."/>
            <person name="Hannick L.I."/>
            <person name="Bidwell S."/>
            <person name="Joardar V."/>
            <person name="Caler E."/>
            <person name="Shao R."/>
            <person name="Barker S.C."/>
            <person name="Cameron S."/>
            <person name="Bruggner R.V."/>
            <person name="Regier A."/>
            <person name="Johnson J."/>
            <person name="Viswanathan L."/>
            <person name="Utterback T.R."/>
            <person name="Sutton G.G."/>
            <person name="Lawson D."/>
            <person name="Waterhouse R.M."/>
            <person name="Venter J.C."/>
            <person name="Strausberg R.L."/>
            <person name="Berenbaum M.R."/>
            <person name="Collins F.H."/>
            <person name="Zdobnov E.M."/>
            <person name="Pittendrigh B.R."/>
        </authorList>
    </citation>
    <scope>NUCLEOTIDE SEQUENCE [LARGE SCALE GENOMIC DNA]</scope>
    <source>
        <strain evidence="10">USDA</strain>
    </source>
</reference>
<reference evidence="11" key="2">
    <citation type="journal article" date="2015" name="Nature">
        <title>Mechanism of phospho-ubiquitin-induced PARKIN activation.</title>
        <authorList>
            <person name="Wauer T."/>
            <person name="Simicek M."/>
            <person name="Schubert A."/>
            <person name="Komander D."/>
        </authorList>
    </citation>
    <scope>X-RAY CRYSTALLOGRAPHY (2.62 ANGSTROMS) OF 141-461 IN COMPLEX WITH ZINC</scope>
    <scope>FUNCTION</scope>
    <scope>ACTIVITY REGULATION</scope>
</reference>
<reference evidence="8" key="3">
    <citation type="journal article" date="2015" name="Nature">
        <authorList>
            <person name="Wauer T."/>
            <person name="Simicek M."/>
            <person name="Schubert A."/>
            <person name="Komander D."/>
        </authorList>
    </citation>
    <scope>ERRATUM OF PUBMED:26161729</scope>
</reference>
<protein>
    <recommendedName>
        <fullName evidence="7">E3 ubiquitin-protein ligase parkin</fullName>
        <ecNumber evidence="6">2.3.2.31</ecNumber>
    </recommendedName>
</protein>
<accession>E0VIU9</accession>
<comment type="function">
    <text evidence="2 6">E3 ubiquitin-protein ligase which accepts ubiquitin from E2 ubiquitin-conjugating enzymes in the form of a thioester and then directly transfers the ubiquitin to targeted substrates, such as Marf, Opa1, Sep1, Tom20 and porin (By similarity). Mediates monoubiquitination as well as 'Lys-6', 'Lys-11', 'Lys-48'-linked and 'Lys-63'-linked polyubiquitination of substrates, depending on the context (PubMed:26161729). Protects against mitochondrial dysfunction during cellular stress, by acting downstream of Pink1, to coordinate mitochondrial quality control mechanisms that remove and replace dysfunctional mitochondrial components (By similarity). Depending on the severity of mitochondrial damage and/or dysfunction, activity ranges from preventing apoptosis and stimulating mitochondrial biogenesis to regulating mitochondrial dynamics and eliminating severely damaged mitochondria via mitophagy (By similarity). Appears to be particularly important in maintaining the physiology and function of cells with high energy demands that are undergoing stress or altered metabolic environment, including spermatids, muscle cells and neurons such as the dopaminergic (DA) neurons (By similarity). Activation and recruitment onto the outer membrane of damaged/dysfunctional mitochondria (OMM) requires Pink1-mediated phosphorylation of both park and ubiquitin (By similarity). In depolarized mitochondria, mediates the decision between mitophagy or preventing apoptosis by inducing either the poly- or monoubiquitination of porin/VDAC; polyubiquitination of porin promotes mitophagy, while monoubiquitination of porin decreases mitochondrial calcium influx which ultimately inhibits apoptosis (By similarity). When cellular stress results in irreversible mitochondrial damage, promotes the autophagic degradation of dysfunctional depolarized mitochondria (mitophagy) by promoting the ubiquitination of mitochondrial proteins (By similarity). Preferentially assembles 'Lys-6'-, 'Lys-11'- and 'Lys-63'-linked polyubiquitin chains following mitochondrial damage, leading to mitophagy (By similarity). In developing tissues, inhibits JNK-mediated apoptosis by negatively regulating bsk transcription (By similarity). The Pink1-park pathway also promotes fission and/or inhibits fusion of damaged mitochondria by mediating the ubiquitination and subsequent degradation of proteins involved in mitochondrial fusion/fission such as Marf and Opa1 (By similarity). This prevents the refusion of unhealthy mitochondria with the healthy mitochondrial network and/or initiates mitochondrial fragmentation facilitating their later engulfment by autophagosomes (By similarity). Regulates motility of damaged mitochondria by phosphorylating Miro which likely promotes its park-dependent degradation by the proteasome; in motor neurons, this inhibits mitochondrial intracellular anterograde transport along the axons which probably increases the chance of the mitochondria being eliminated in the soma (By similarity). The Pink1-park pathway is also involved in mitochondrial regeneration processes such as promoting mitochondrial biogenesis, activating localized mitochondrial repair, promoting selective turnover of mitochondrial proteins and initiating the mitochondrial import of endogenous proteins (By similarity). Involved in mitochondrial biogenesis via the ubiquitination of transcriptional repressor Paris which leads to its subsequent proteasomal degradation and allows activation of the transcription factor srl (By similarity). Promotes localized mitochondrial repair by activating the translation of specific nuclear-encoded mitochondrial RNAs (nc-mtRNAs) on the mitochondrial surface, including several key electron transport chain component nc-mtRNAs (By similarity).</text>
</comment>
<comment type="catalytic activity">
    <reaction evidence="6">
        <text>[E2 ubiquitin-conjugating enzyme]-S-ubiquitinyl-L-cysteine + [acceptor protein]-L-lysine = [E2 ubiquitin-conjugating enzyme]-L-cysteine + [acceptor protein]-N(6)-ubiquitinyl-L-lysine.</text>
        <dbReference type="EC" id="2.3.2.31"/>
    </reaction>
</comment>
<comment type="activity regulation">
    <text evidence="1 6">In the autoinhibited state the side chain of Phe-460 inserts into a hydrophobic groove in RING-0, occluding the ubiquitin acceptor site Cys-428, whereas the REP repressor element binds RING-1 and blocks its E2-binding site (PubMed:26161729). Activation of park requires 2 steps: (1) phosphorylation at Ser-92 by Pink1 and (2) binding to phosphorylated ubiquitin, leading to unlock repression of the catalytic Cys-428 by the RING-0 region via an allosteric mechanism and converting park to its fully-active form (PubMed:26161729). According to another report, phosphorylation at Ser-92 by Pink1 is not essential for activation and only binding to phosphorylated ubiquitin is essential to unlock repression (By similarity).</text>
</comment>
<comment type="pathway">
    <text evidence="6">Protein modification; protein ubiquitination.</text>
</comment>
<comment type="subunit">
    <text evidence="2">Forms an E3 ubiquitin ligase complex with E2 ubiquitin-conjugating enzymes.</text>
</comment>
<comment type="subcellular location">
    <subcellularLocation>
        <location evidence="2">Mitochondrion</location>
    </subcellularLocation>
    <subcellularLocation>
        <location evidence="2">Cytoplasm</location>
        <location evidence="2">Cytosol</location>
    </subcellularLocation>
    <text evidence="2">Translocates from the cytosol to dysfunctional mitochondria that have lost their mitochondrial membrane potential; recruitment to mitochondria is Pink1-dependent.</text>
</comment>
<comment type="domain">
    <text evidence="2">The RING-type 1 zinc finger domain is required for ubiquitination activity.</text>
</comment>
<comment type="domain">
    <text evidence="2">Members of the RBR family are atypical E3 ligases (By similarity). They interact with E2 conjugating enzymes and function like HECT-type E3 enzymes: they bind E2s via the first RING domain, but require an obligate trans-thiolation step during the ubiquitin transfer, requiring a conserved cysteine residue in the second RING domain (By similarity).</text>
</comment>
<comment type="PTM">
    <text evidence="2">Auto-ubiquitinates in an E2-dependent manner leading to its own degradation.</text>
</comment>
<comment type="PTM">
    <text evidence="2">Phosphorylated (By similarity). Activation requires phosphorylation at Ser-92 by Pink1 and binding to Pink1-phosphorylated polyubiquitin chains (By similarity). Phosphorylation at Thr-176 by Pink1 is also important for mitochondrial localization (By similarity).</text>
</comment>
<comment type="similarity">
    <text evidence="8">Belongs to the RBR family. Parkin subfamily.</text>
</comment>
<name>PRKN_PEDHC</name>
<keyword id="KW-0002">3D-structure</keyword>
<keyword id="KW-0072">Autophagy</keyword>
<keyword id="KW-0963">Cytoplasm</keyword>
<keyword id="KW-0479">Metal-binding</keyword>
<keyword id="KW-0496">Mitochondrion</keyword>
<keyword id="KW-0597">Phosphoprotein</keyword>
<keyword id="KW-1185">Reference proteome</keyword>
<keyword id="KW-0677">Repeat</keyword>
<keyword id="KW-0808">Transferase</keyword>
<keyword id="KW-0832">Ubl conjugation</keyword>
<keyword id="KW-0833">Ubl conjugation pathway</keyword>
<keyword id="KW-0862">Zinc</keyword>
<keyword id="KW-0863">Zinc-finger</keyword>
<organism evidence="10">
    <name type="scientific">Pediculus humanus subsp. corporis</name>
    <name type="common">Body louse</name>
    <dbReference type="NCBI Taxonomy" id="121224"/>
    <lineage>
        <taxon>Eukaryota</taxon>
        <taxon>Metazoa</taxon>
        <taxon>Ecdysozoa</taxon>
        <taxon>Arthropoda</taxon>
        <taxon>Hexapoda</taxon>
        <taxon>Insecta</taxon>
        <taxon>Pterygota</taxon>
        <taxon>Neoptera</taxon>
        <taxon>Paraneoptera</taxon>
        <taxon>Psocodea</taxon>
        <taxon>Phthiraptera</taxon>
        <taxon>Anoplura</taxon>
        <taxon>Pediculidae</taxon>
        <taxon>Pediculus</taxon>
    </lineage>
</organism>
<sequence length="461" mass="51864">MSILEWFWNILCGMAQYLTFSKNLTNDNLVNIYVKSNVGGTISVNLDPKSDIKNVKELVAPKLGLEPDDVKIIFAGKELLDSTVIEVLDFFSDILHAVKVNKKIKNVIPDKPLCETLEELHQLNDQKNVESIEESNLKNEGKNKAHFFIYCANPCKKINTGKLRVCCSECKHGAFTVDTDPQSWADVLDKNKITGVCNNVGCEGLYAKFYFKCASHPSQGENDTAVPLNLIKRNHKKIPCLACTDICDPVLVFSCDNRHVTCLECFKNYCGSRLKDRQFLSHPDFGYTLPCPAGCSNSFIEEVHHFRLLTDAQYEQYHRFATEEFILQAGGVLCPQPGCGQGILIDQNCNRVQCSCGYVFCGKCLEGFHLGECLNPTDVPFLSQNCDYPLDPEKLEKARWDEASSTVIKVLTKPCPKCRTSTERAGGCMHMICTRANCGFHWCWVCQGPWERDCMASHWFG</sequence>
<evidence type="ECO:0000250" key="1">
    <source>
        <dbReference type="UniProtKB" id="O60260"/>
    </source>
</evidence>
<evidence type="ECO:0000250" key="2">
    <source>
        <dbReference type="UniProtKB" id="Q7KTX7"/>
    </source>
</evidence>
<evidence type="ECO:0000255" key="3"/>
<evidence type="ECO:0000255" key="4">
    <source>
        <dbReference type="PROSITE-ProRule" id="PRU00214"/>
    </source>
</evidence>
<evidence type="ECO:0000255" key="5">
    <source>
        <dbReference type="PROSITE-ProRule" id="PRU01221"/>
    </source>
</evidence>
<evidence type="ECO:0000269" key="6">
    <source>
    </source>
</evidence>
<evidence type="ECO:0000303" key="7">
    <source>
    </source>
</evidence>
<evidence type="ECO:0000305" key="8"/>
<evidence type="ECO:0000312" key="9">
    <source>
        <dbReference type="EMBL" id="EEB13305.1"/>
    </source>
</evidence>
<evidence type="ECO:0000312" key="10">
    <source>
        <dbReference type="Proteomes" id="UP000009046"/>
    </source>
</evidence>
<evidence type="ECO:0007744" key="11">
    <source>
        <dbReference type="PDB" id="5CAW"/>
    </source>
</evidence>
<evidence type="ECO:0007829" key="12">
    <source>
        <dbReference type="PDB" id="5CAW"/>
    </source>
</evidence>
<feature type="chain" id="PRO_0000454928" description="E3 ubiquitin-protein ligase parkin">
    <location>
        <begin position="1"/>
        <end position="461"/>
    </location>
</feature>
<feature type="domain" description="Ubiquitin-like" evidence="4">
    <location>
        <begin position="30"/>
        <end position="90"/>
    </location>
</feature>
<feature type="zinc finger region" description="RING-type 0; atypical" evidence="1">
    <location>
        <begin position="145"/>
        <end position="227"/>
    </location>
</feature>
<feature type="zinc finger region" description="RING-type 1" evidence="5">
    <location>
        <begin position="240"/>
        <end position="295"/>
    </location>
</feature>
<feature type="zinc finger region" description="IBR-type" evidence="5">
    <location>
        <begin position="315"/>
        <end position="373"/>
    </location>
</feature>
<feature type="zinc finger region" description="IBR-type" evidence="3">
    <location>
        <begin position="411"/>
        <end position="452"/>
    </location>
</feature>
<feature type="zinc finger region" description="RING-type 2; atypical" evidence="5">
    <location>
        <begin position="415"/>
        <end position="446"/>
    </location>
</feature>
<feature type="region of interest" description="TRIAD supradomain" evidence="5">
    <location>
        <begin position="236"/>
        <end position="461"/>
    </location>
</feature>
<feature type="active site" evidence="5">
    <location>
        <position position="428"/>
    </location>
</feature>
<feature type="binding site" evidence="6 11">
    <location>
        <position position="151"/>
    </location>
    <ligand>
        <name>Zn(2+)</name>
        <dbReference type="ChEBI" id="CHEBI:29105"/>
        <label>1</label>
    </ligand>
</feature>
<feature type="binding site" evidence="6 11">
    <location>
        <position position="155"/>
    </location>
    <ligand>
        <name>Zn(2+)</name>
        <dbReference type="ChEBI" id="CHEBI:29105"/>
        <label>1</label>
    </ligand>
</feature>
<feature type="binding site" evidence="6 11">
    <location>
        <position position="167"/>
    </location>
    <ligand>
        <name>Zn(2+)</name>
        <dbReference type="ChEBI" id="CHEBI:29105"/>
        <label>2</label>
    </ligand>
</feature>
<feature type="binding site" evidence="6 11">
    <location>
        <position position="170"/>
    </location>
    <ligand>
        <name>Zn(2+)</name>
        <dbReference type="ChEBI" id="CHEBI:29105"/>
        <label>2</label>
    </ligand>
</feature>
<feature type="binding site" evidence="6 11">
    <location>
        <position position="197"/>
    </location>
    <ligand>
        <name>Zn(2+)</name>
        <dbReference type="ChEBI" id="CHEBI:29105"/>
        <label>2</label>
    </ligand>
</feature>
<feature type="binding site" evidence="6 11">
    <location>
        <position position="202"/>
    </location>
    <ligand>
        <name>Zn(2+)</name>
        <dbReference type="ChEBI" id="CHEBI:29105"/>
        <label>2</label>
    </ligand>
</feature>
<feature type="binding site" evidence="6 11">
    <location>
        <position position="213"/>
    </location>
    <ligand>
        <name>Zn(2+)</name>
        <dbReference type="ChEBI" id="CHEBI:29105"/>
        <label>1</label>
    </ligand>
</feature>
<feature type="binding site" evidence="6 11">
    <location>
        <position position="216"/>
    </location>
    <ligand>
        <name>Zn(2+)</name>
        <dbReference type="ChEBI" id="CHEBI:29105"/>
        <label>1</label>
    </ligand>
</feature>
<feature type="binding site" evidence="5 6 11">
    <location>
        <position position="240"/>
    </location>
    <ligand>
        <name>Zn(2+)</name>
        <dbReference type="ChEBI" id="CHEBI:29105"/>
        <label>3</label>
    </ligand>
</feature>
<feature type="binding site" evidence="5 6 11">
    <location>
        <position position="243"/>
    </location>
    <ligand>
        <name>Zn(2+)</name>
        <dbReference type="ChEBI" id="CHEBI:29105"/>
        <label>3</label>
    </ligand>
</feature>
<feature type="binding site" evidence="5 6 11">
    <location>
        <position position="255"/>
    </location>
    <ligand>
        <name>Zn(2+)</name>
        <dbReference type="ChEBI" id="CHEBI:29105"/>
        <label>4</label>
    </ligand>
</feature>
<feature type="binding site" evidence="5 6 11">
    <location>
        <position position="259"/>
    </location>
    <ligand>
        <name>Zn(2+)</name>
        <dbReference type="ChEBI" id="CHEBI:29105"/>
        <label>4</label>
    </ligand>
</feature>
<feature type="binding site" evidence="5 6 11">
    <location>
        <position position="262"/>
    </location>
    <ligand>
        <name>Zn(2+)</name>
        <dbReference type="ChEBI" id="CHEBI:29105"/>
        <label>3</label>
    </ligand>
</feature>
<feature type="binding site" evidence="5 6 11">
    <location>
        <position position="265"/>
    </location>
    <ligand>
        <name>Zn(2+)</name>
        <dbReference type="ChEBI" id="CHEBI:29105"/>
        <label>3</label>
    </ligand>
</feature>
<feature type="binding site" evidence="5 6 11">
    <location>
        <position position="291"/>
    </location>
    <ligand>
        <name>Zn(2+)</name>
        <dbReference type="ChEBI" id="CHEBI:29105"/>
        <label>4</label>
    </ligand>
</feature>
<feature type="binding site" evidence="5 6 11">
    <location>
        <position position="295"/>
    </location>
    <ligand>
        <name>Zn(2+)</name>
        <dbReference type="ChEBI" id="CHEBI:29105"/>
        <label>4</label>
    </ligand>
</feature>
<feature type="binding site" evidence="5 6 11">
    <location>
        <position position="334"/>
    </location>
    <ligand>
        <name>Zn(2+)</name>
        <dbReference type="ChEBI" id="CHEBI:29105"/>
        <label>5</label>
    </ligand>
</feature>
<feature type="binding site" evidence="5 6 11">
    <location>
        <position position="339"/>
    </location>
    <ligand>
        <name>Zn(2+)</name>
        <dbReference type="ChEBI" id="CHEBI:29105"/>
        <label>5</label>
    </ligand>
</feature>
<feature type="binding site" evidence="5 6 11">
    <location>
        <position position="354"/>
    </location>
    <ligand>
        <name>Zn(2+)</name>
        <dbReference type="ChEBI" id="CHEBI:29105"/>
        <label>5</label>
    </ligand>
</feature>
<feature type="binding site" evidence="5 6 11">
    <location>
        <position position="356"/>
    </location>
    <ligand>
        <name>Zn(2+)</name>
        <dbReference type="ChEBI" id="CHEBI:29105"/>
        <label>5</label>
    </ligand>
</feature>
<feature type="binding site" evidence="5 6 11">
    <location>
        <position position="361"/>
    </location>
    <ligand>
        <name>Zn(2+)</name>
        <dbReference type="ChEBI" id="CHEBI:29105"/>
        <label>6</label>
    </ligand>
</feature>
<feature type="binding site" evidence="5 6 11">
    <location>
        <position position="364"/>
    </location>
    <ligand>
        <name>Zn(2+)</name>
        <dbReference type="ChEBI" id="CHEBI:29105"/>
        <label>6</label>
    </ligand>
</feature>
<feature type="binding site" evidence="5 6 11">
    <location>
        <position position="369"/>
    </location>
    <ligand>
        <name>Zn(2+)</name>
        <dbReference type="ChEBI" id="CHEBI:29105"/>
        <label>6</label>
    </ligand>
</feature>
<feature type="binding site" evidence="5 6 11">
    <location>
        <position position="373"/>
    </location>
    <ligand>
        <name>Zn(2+)</name>
        <dbReference type="ChEBI" id="CHEBI:29105"/>
        <label>6</label>
    </ligand>
</feature>
<feature type="binding site" evidence="5 6 11">
    <location>
        <position position="415"/>
    </location>
    <ligand>
        <name>Zn(2+)</name>
        <dbReference type="ChEBI" id="CHEBI:29105"/>
        <label>7</label>
    </ligand>
</feature>
<feature type="binding site" evidence="5 6 11">
    <location>
        <position position="418"/>
    </location>
    <ligand>
        <name>Zn(2+)</name>
        <dbReference type="ChEBI" id="CHEBI:29105"/>
        <label>7</label>
    </ligand>
</feature>
<feature type="binding site" evidence="5 6 11">
    <location>
        <position position="433"/>
    </location>
    <ligand>
        <name>Zn(2+)</name>
        <dbReference type="ChEBI" id="CHEBI:29105"/>
        <label>7</label>
    </ligand>
</feature>
<feature type="binding site" evidence="5 6 11">
    <location>
        <position position="438"/>
    </location>
    <ligand>
        <name>Zn(2+)</name>
        <dbReference type="ChEBI" id="CHEBI:29105"/>
        <label>7</label>
    </ligand>
</feature>
<feature type="binding site" evidence="6 11">
    <location>
        <position position="443"/>
    </location>
    <ligand>
        <name>Zn(2+)</name>
        <dbReference type="ChEBI" id="CHEBI:29105"/>
        <label>8</label>
    </ligand>
</feature>
<feature type="binding site" evidence="6 11">
    <location>
        <position position="446"/>
    </location>
    <ligand>
        <name>Zn(2+)</name>
        <dbReference type="ChEBI" id="CHEBI:29105"/>
        <label>8</label>
    </ligand>
</feature>
<feature type="binding site" evidence="6 11">
    <location>
        <position position="454"/>
    </location>
    <ligand>
        <name>Zn(2+)</name>
        <dbReference type="ChEBI" id="CHEBI:29105"/>
        <label>8</label>
    </ligand>
</feature>
<feature type="binding site" evidence="6 11">
    <location>
        <position position="458"/>
    </location>
    <ligand>
        <name>Zn(2+)</name>
        <dbReference type="ChEBI" id="CHEBI:29105"/>
        <label>8</label>
    </ligand>
</feature>
<feature type="site" description="Implicated in binding to phosphorylated ubiquitin" evidence="6">
    <location>
        <position position="304"/>
    </location>
</feature>
<feature type="site" description="Implicated in binding to phosphorylated ubiquitin" evidence="6">
    <location>
        <position position="307"/>
    </location>
</feature>
<feature type="site" description="Implicated in binding to phosphorylated ubiquitin" evidence="6">
    <location>
        <position position="314"/>
    </location>
</feature>
<feature type="modified residue" description="Phosphoserine" evidence="2">
    <location>
        <position position="92"/>
    </location>
</feature>
<feature type="modified residue" description="Phosphothreonine" evidence="2">
    <location>
        <position position="176"/>
    </location>
</feature>
<feature type="strand" evidence="12">
    <location>
        <begin position="148"/>
        <end position="151"/>
    </location>
</feature>
<feature type="turn" evidence="12">
    <location>
        <begin position="152"/>
        <end position="155"/>
    </location>
</feature>
<feature type="strand" evidence="12">
    <location>
        <begin position="157"/>
        <end position="167"/>
    </location>
</feature>
<feature type="turn" evidence="12">
    <location>
        <begin position="168"/>
        <end position="170"/>
    </location>
</feature>
<feature type="strand" evidence="12">
    <location>
        <begin position="175"/>
        <end position="179"/>
    </location>
</feature>
<feature type="helix" evidence="12">
    <location>
        <begin position="184"/>
        <end position="188"/>
    </location>
</feature>
<feature type="strand" evidence="12">
    <location>
        <begin position="189"/>
        <end position="191"/>
    </location>
</feature>
<feature type="strand" evidence="12">
    <location>
        <begin position="194"/>
        <end position="197"/>
    </location>
</feature>
<feature type="strand" evidence="12">
    <location>
        <begin position="206"/>
        <end position="216"/>
    </location>
</feature>
<feature type="strand" evidence="12">
    <location>
        <begin position="225"/>
        <end position="227"/>
    </location>
</feature>
<feature type="turn" evidence="12">
    <location>
        <begin position="241"/>
        <end position="243"/>
    </location>
</feature>
<feature type="strand" evidence="12">
    <location>
        <begin position="248"/>
        <end position="252"/>
    </location>
</feature>
<feature type="strand" evidence="12">
    <location>
        <begin position="259"/>
        <end position="262"/>
    </location>
</feature>
<feature type="helix" evidence="12">
    <location>
        <begin position="263"/>
        <end position="275"/>
    </location>
</feature>
<feature type="strand" evidence="12">
    <location>
        <begin position="279"/>
        <end position="282"/>
    </location>
</feature>
<feature type="turn" evidence="12">
    <location>
        <begin position="283"/>
        <end position="285"/>
    </location>
</feature>
<feature type="strand" evidence="12">
    <location>
        <begin position="286"/>
        <end position="288"/>
    </location>
</feature>
<feature type="helix" evidence="12">
    <location>
        <begin position="303"/>
        <end position="308"/>
    </location>
</feature>
<feature type="helix" evidence="12">
    <location>
        <begin position="311"/>
        <end position="328"/>
    </location>
</feature>
<feature type="strand" evidence="12">
    <location>
        <begin position="342"/>
        <end position="344"/>
    </location>
</feature>
<feature type="strand" evidence="12">
    <location>
        <begin position="351"/>
        <end position="353"/>
    </location>
</feature>
<feature type="strand" evidence="12">
    <location>
        <begin position="359"/>
        <end position="361"/>
    </location>
</feature>
<feature type="turn" evidence="12">
    <location>
        <begin position="362"/>
        <end position="364"/>
    </location>
</feature>
<feature type="strand" evidence="12">
    <location>
        <begin position="370"/>
        <end position="372"/>
    </location>
</feature>
<feature type="helix" evidence="12">
    <location>
        <begin position="392"/>
        <end position="397"/>
    </location>
</feature>
<feature type="strand" evidence="12">
    <location>
        <begin position="404"/>
        <end position="406"/>
    </location>
</feature>
<feature type="turn" evidence="12">
    <location>
        <begin position="416"/>
        <end position="418"/>
    </location>
</feature>
<feature type="strand" evidence="12">
    <location>
        <begin position="426"/>
        <end position="428"/>
    </location>
</feature>
<feature type="strand" evidence="12">
    <location>
        <begin position="430"/>
        <end position="432"/>
    </location>
</feature>
<feature type="strand" evidence="12">
    <location>
        <begin position="435"/>
        <end position="437"/>
    </location>
</feature>
<feature type="strand" evidence="12">
    <location>
        <begin position="441"/>
        <end position="443"/>
    </location>
</feature>
<feature type="turn" evidence="12">
    <location>
        <begin position="444"/>
        <end position="447"/>
    </location>
</feature>
<feature type="helix" evidence="12">
    <location>
        <begin position="452"/>
        <end position="458"/>
    </location>
</feature>
<proteinExistence type="evidence at protein level"/>
<dbReference type="EC" id="2.3.2.31" evidence="6"/>
<dbReference type="EMBL" id="AAZO01002709">
    <property type="status" value="NOT_ANNOTATED_CDS"/>
    <property type="molecule type" value="Genomic_DNA"/>
</dbReference>
<dbReference type="EMBL" id="DS235206">
    <property type="protein sequence ID" value="EEB13305.1"/>
    <property type="molecule type" value="Genomic_DNA"/>
</dbReference>
<dbReference type="RefSeq" id="XP_002426043.1">
    <property type="nucleotide sequence ID" value="XM_002425998.1"/>
</dbReference>
<dbReference type="PDB" id="5CAW">
    <property type="method" value="X-ray"/>
    <property type="resolution" value="2.62 A"/>
    <property type="chains" value="A/C=141-461"/>
</dbReference>
<dbReference type="PDBsum" id="5CAW"/>
<dbReference type="SMR" id="E0VIU9"/>
<dbReference type="DIP" id="DIP-61596N"/>
<dbReference type="FunCoup" id="E0VIU9">
    <property type="interactions" value="695"/>
</dbReference>
<dbReference type="STRING" id="121224.E0VIU9"/>
<dbReference type="EnsemblMetazoa" id="PHUM233570-RA">
    <property type="protein sequence ID" value="PHUM233570-PA"/>
    <property type="gene ID" value="PHUM233570"/>
</dbReference>
<dbReference type="GeneID" id="8230172"/>
<dbReference type="KEGG" id="phu:Phum_PHUM233570"/>
<dbReference type="CTD" id="8230172"/>
<dbReference type="VEuPathDB" id="VectorBase:PHUM233570"/>
<dbReference type="eggNOG" id="KOG0006">
    <property type="taxonomic scope" value="Eukaryota"/>
</dbReference>
<dbReference type="HOGENOM" id="CLU_050804_0_0_1"/>
<dbReference type="InParanoid" id="E0VIU9"/>
<dbReference type="OMA" id="CQWDHWF"/>
<dbReference type="OrthoDB" id="1431934at2759"/>
<dbReference type="PhylomeDB" id="E0VIU9"/>
<dbReference type="UniPathway" id="UPA00143"/>
<dbReference type="EvolutionaryTrace" id="E0VIU9"/>
<dbReference type="Proteomes" id="UP000009046">
    <property type="component" value="Unassembled WGS sequence"/>
</dbReference>
<dbReference type="GO" id="GO:0005829">
    <property type="term" value="C:cytosol"/>
    <property type="evidence" value="ECO:0007669"/>
    <property type="project" value="UniProtKB-SubCell"/>
</dbReference>
<dbReference type="GO" id="GO:0005739">
    <property type="term" value="C:mitochondrion"/>
    <property type="evidence" value="ECO:0007669"/>
    <property type="project" value="UniProtKB-SubCell"/>
</dbReference>
<dbReference type="GO" id="GO:0004842">
    <property type="term" value="F:ubiquitin-protein transferase activity"/>
    <property type="evidence" value="ECO:0007669"/>
    <property type="project" value="InterPro"/>
</dbReference>
<dbReference type="GO" id="GO:0008270">
    <property type="term" value="F:zinc ion binding"/>
    <property type="evidence" value="ECO:0007669"/>
    <property type="project" value="UniProtKB-KW"/>
</dbReference>
<dbReference type="GO" id="GO:0006914">
    <property type="term" value="P:autophagy"/>
    <property type="evidence" value="ECO:0007669"/>
    <property type="project" value="UniProtKB-KW"/>
</dbReference>
<dbReference type="GO" id="GO:0009893">
    <property type="term" value="P:positive regulation of metabolic process"/>
    <property type="evidence" value="ECO:0007669"/>
    <property type="project" value="UniProtKB-ARBA"/>
</dbReference>
<dbReference type="GO" id="GO:0016567">
    <property type="term" value="P:protein ubiquitination"/>
    <property type="evidence" value="ECO:0007669"/>
    <property type="project" value="UniProtKB-UniPathway"/>
</dbReference>
<dbReference type="CDD" id="cd20340">
    <property type="entry name" value="BRcat_RBR_parkin"/>
    <property type="match status" value="1"/>
</dbReference>
<dbReference type="CDD" id="cd20357">
    <property type="entry name" value="Rcat_RBR_parkin"/>
    <property type="match status" value="1"/>
</dbReference>
<dbReference type="CDD" id="cd16627">
    <property type="entry name" value="RING-HC_RBR_parkin"/>
    <property type="match status" value="1"/>
</dbReference>
<dbReference type="CDD" id="cd21382">
    <property type="entry name" value="RING0_parkin"/>
    <property type="match status" value="1"/>
</dbReference>
<dbReference type="FunFam" id="1.20.120.1750:FF:000009">
    <property type="entry name" value="E3 ubiquitin-protein ligase parkin"/>
    <property type="match status" value="1"/>
</dbReference>
<dbReference type="Gene3D" id="1.20.120.1750">
    <property type="match status" value="1"/>
</dbReference>
<dbReference type="Gene3D" id="2.20.25.20">
    <property type="match status" value="1"/>
</dbReference>
<dbReference type="Gene3D" id="3.10.20.90">
    <property type="entry name" value="Phosphatidylinositol 3-kinase Catalytic Subunit, Chain A, domain 1"/>
    <property type="match status" value="1"/>
</dbReference>
<dbReference type="InterPro" id="IPR047534">
    <property type="entry name" value="BRcat_RBR_parkin"/>
</dbReference>
<dbReference type="InterPro" id="IPR031127">
    <property type="entry name" value="E3_UB_ligase_RBR"/>
</dbReference>
<dbReference type="InterPro" id="IPR002867">
    <property type="entry name" value="IBR_dom"/>
</dbReference>
<dbReference type="InterPro" id="IPR003977">
    <property type="entry name" value="Parkin"/>
</dbReference>
<dbReference type="InterPro" id="IPR054694">
    <property type="entry name" value="Parkin-like_IBR"/>
</dbReference>
<dbReference type="InterPro" id="IPR041565">
    <property type="entry name" value="Parkin_Znf-RING"/>
</dbReference>
<dbReference type="InterPro" id="IPR047536">
    <property type="entry name" value="Rcat_RBR_parkin"/>
</dbReference>
<dbReference type="InterPro" id="IPR047535">
    <property type="entry name" value="RING-HC_RBR_parkin"/>
</dbReference>
<dbReference type="InterPro" id="IPR044066">
    <property type="entry name" value="TRIAD_supradom"/>
</dbReference>
<dbReference type="InterPro" id="IPR000626">
    <property type="entry name" value="Ubiquitin-like_dom"/>
</dbReference>
<dbReference type="InterPro" id="IPR029071">
    <property type="entry name" value="Ubiquitin-like_domsf"/>
</dbReference>
<dbReference type="InterPro" id="IPR041170">
    <property type="entry name" value="Znf-RING_14"/>
</dbReference>
<dbReference type="PANTHER" id="PTHR11685">
    <property type="entry name" value="RBR FAMILY RING FINGER AND IBR DOMAIN-CONTAINING"/>
    <property type="match status" value="1"/>
</dbReference>
<dbReference type="Pfam" id="PF22605">
    <property type="entry name" value="IBR_2"/>
    <property type="match status" value="1"/>
</dbReference>
<dbReference type="Pfam" id="PF00240">
    <property type="entry name" value="ubiquitin"/>
    <property type="match status" value="1"/>
</dbReference>
<dbReference type="Pfam" id="PF17976">
    <property type="entry name" value="zf-RING_12"/>
    <property type="match status" value="1"/>
</dbReference>
<dbReference type="Pfam" id="PF17978">
    <property type="entry name" value="zf-RING_14"/>
    <property type="match status" value="1"/>
</dbReference>
<dbReference type="PIRSF" id="PIRSF037880">
    <property type="entry name" value="Parkin"/>
    <property type="match status" value="1"/>
</dbReference>
<dbReference type="PRINTS" id="PR01475">
    <property type="entry name" value="PARKIN"/>
</dbReference>
<dbReference type="SMART" id="SM00647">
    <property type="entry name" value="IBR"/>
    <property type="match status" value="2"/>
</dbReference>
<dbReference type="SMART" id="SM00213">
    <property type="entry name" value="UBQ"/>
    <property type="match status" value="1"/>
</dbReference>
<dbReference type="SUPFAM" id="SSF57850">
    <property type="entry name" value="RING/U-box"/>
    <property type="match status" value="2"/>
</dbReference>
<dbReference type="SUPFAM" id="SSF54236">
    <property type="entry name" value="Ubiquitin-like"/>
    <property type="match status" value="1"/>
</dbReference>
<dbReference type="PROSITE" id="PS51873">
    <property type="entry name" value="TRIAD"/>
    <property type="match status" value="1"/>
</dbReference>
<dbReference type="PROSITE" id="PS50053">
    <property type="entry name" value="UBIQUITIN_2"/>
    <property type="match status" value="1"/>
</dbReference>